<reference key="1">
    <citation type="journal article" date="2000" name="Proc. Natl. Acad. Sci. U.S.A.">
        <title>Genome sequence of Halobacterium species NRC-1.</title>
        <authorList>
            <person name="Ng W.V."/>
            <person name="Kennedy S.P."/>
            <person name="Mahairas G.G."/>
            <person name="Berquist B."/>
            <person name="Pan M."/>
            <person name="Shukla H.D."/>
            <person name="Lasky S.R."/>
            <person name="Baliga N.S."/>
            <person name="Thorsson V."/>
            <person name="Sbrogna J."/>
            <person name="Swartzell S."/>
            <person name="Weir D."/>
            <person name="Hall J."/>
            <person name="Dahl T.A."/>
            <person name="Welti R."/>
            <person name="Goo Y.A."/>
            <person name="Leithauser B."/>
            <person name="Keller K."/>
            <person name="Cruz R."/>
            <person name="Danson M.J."/>
            <person name="Hough D.W."/>
            <person name="Maddocks D.G."/>
            <person name="Jablonski P.E."/>
            <person name="Krebs M.P."/>
            <person name="Angevine C.M."/>
            <person name="Dale H."/>
            <person name="Isenbarger T.A."/>
            <person name="Peck R.F."/>
            <person name="Pohlschroder M."/>
            <person name="Spudich J.L."/>
            <person name="Jung K.-H."/>
            <person name="Alam M."/>
            <person name="Freitas T."/>
            <person name="Hou S."/>
            <person name="Daniels C.J."/>
            <person name="Dennis P.P."/>
            <person name="Omer A.D."/>
            <person name="Ebhardt H."/>
            <person name="Lowe T.M."/>
            <person name="Liang P."/>
            <person name="Riley M."/>
            <person name="Hood L."/>
            <person name="DasSarma S."/>
        </authorList>
    </citation>
    <scope>NUCLEOTIDE SEQUENCE [LARGE SCALE GENOMIC DNA]</scope>
    <source>
        <strain>ATCC 700922 / JCM 11081 / NRC-1</strain>
    </source>
</reference>
<comment type="function">
    <text evidence="1">Probably part of an ABC transporter complex. Responsible for energy coupling to the transport system (By similarity).</text>
</comment>
<comment type="subcellular location">
    <subcellularLocation>
        <location evidence="1">Cell membrane</location>
        <topology evidence="1">Peripheral membrane protein</topology>
    </subcellularLocation>
</comment>
<comment type="similarity">
    <text evidence="3">Belongs to the ABC transporter superfamily.</text>
</comment>
<accession>Q9HMZ4</accession>
<sequence length="232" mass="24419">MLSVRNLVHRYGDTVAVDGVSLDVADGECVVVTGANGSGKTTLVRHCNGLLEPDDGEVLVNGTPVGEDLVAARASVGMVFQNPRDGFVGATVGADVAFGPENLGRPREEIDARVADALDAVELGGRRDERVADLSGGEQERVAIAAALAMRPDHLVLDEPFTGLDWPARQSVLDRLRALHAAGTSLIVVTHDLRDVWTLADRVVAMRDGEIALRGDPADVRGALPDAGVRPP</sequence>
<organism>
    <name type="scientific">Halobacterium salinarum (strain ATCC 700922 / JCM 11081 / NRC-1)</name>
    <name type="common">Halobacterium halobium</name>
    <dbReference type="NCBI Taxonomy" id="64091"/>
    <lineage>
        <taxon>Archaea</taxon>
        <taxon>Methanobacteriati</taxon>
        <taxon>Methanobacteriota</taxon>
        <taxon>Stenosarchaea group</taxon>
        <taxon>Halobacteria</taxon>
        <taxon>Halobacteriales</taxon>
        <taxon>Halobacteriaceae</taxon>
        <taxon>Halobacterium</taxon>
        <taxon>Halobacterium salinarum NRC-34001</taxon>
    </lineage>
</organism>
<protein>
    <recommendedName>
        <fullName>Putative ABC transporter ATP-binding protein VNG_2317G</fullName>
        <ecNumber>7.-.-.-</ecNumber>
    </recommendedName>
</protein>
<feature type="chain" id="PRO_0000092131" description="Putative ABC transporter ATP-binding protein VNG_2317G">
    <location>
        <begin position="1"/>
        <end position="232"/>
    </location>
</feature>
<feature type="domain" description="ABC transporter" evidence="2">
    <location>
        <begin position="2"/>
        <end position="231"/>
    </location>
</feature>
<feature type="binding site" evidence="2">
    <location>
        <begin position="34"/>
        <end position="41"/>
    </location>
    <ligand>
        <name>ATP</name>
        <dbReference type="ChEBI" id="CHEBI:30616"/>
    </ligand>
</feature>
<dbReference type="EC" id="7.-.-.-"/>
<dbReference type="EMBL" id="AE004437">
    <property type="protein sequence ID" value="AAG20427.1"/>
    <property type="molecule type" value="Genomic_DNA"/>
</dbReference>
<dbReference type="PIR" id="G84382">
    <property type="entry name" value="G84382"/>
</dbReference>
<dbReference type="RefSeq" id="WP_010903729.1">
    <property type="nucleotide sequence ID" value="NC_002607.1"/>
</dbReference>
<dbReference type="SMR" id="Q9HMZ4"/>
<dbReference type="STRING" id="64091.VNG_2317G"/>
<dbReference type="PaxDb" id="64091-VNG_2317G"/>
<dbReference type="KEGG" id="hal:VNG_2317G"/>
<dbReference type="PATRIC" id="fig|64091.14.peg.1792"/>
<dbReference type="HOGENOM" id="CLU_000604_1_22_2"/>
<dbReference type="InParanoid" id="Q9HMZ4"/>
<dbReference type="OrthoDB" id="35850at2157"/>
<dbReference type="PhylomeDB" id="Q9HMZ4"/>
<dbReference type="Proteomes" id="UP000000554">
    <property type="component" value="Chromosome"/>
</dbReference>
<dbReference type="GO" id="GO:0043190">
    <property type="term" value="C:ATP-binding cassette (ABC) transporter complex"/>
    <property type="evidence" value="ECO:0000318"/>
    <property type="project" value="GO_Central"/>
</dbReference>
<dbReference type="GO" id="GO:0005524">
    <property type="term" value="F:ATP binding"/>
    <property type="evidence" value="ECO:0000318"/>
    <property type="project" value="GO_Central"/>
</dbReference>
<dbReference type="GO" id="GO:0016887">
    <property type="term" value="F:ATP hydrolysis activity"/>
    <property type="evidence" value="ECO:0007669"/>
    <property type="project" value="InterPro"/>
</dbReference>
<dbReference type="GO" id="GO:0042626">
    <property type="term" value="F:ATPase-coupled transmembrane transporter activity"/>
    <property type="evidence" value="ECO:0000318"/>
    <property type="project" value="GO_Central"/>
</dbReference>
<dbReference type="CDD" id="cd03225">
    <property type="entry name" value="ABC_cobalt_CbiO_domain1"/>
    <property type="match status" value="1"/>
</dbReference>
<dbReference type="FunFam" id="3.40.50.300:FF:003227">
    <property type="entry name" value="ATPase component BioM of energizing module of biotin ECF transporter"/>
    <property type="match status" value="1"/>
</dbReference>
<dbReference type="Gene3D" id="3.40.50.300">
    <property type="entry name" value="P-loop containing nucleotide triphosphate hydrolases"/>
    <property type="match status" value="1"/>
</dbReference>
<dbReference type="InterPro" id="IPR003593">
    <property type="entry name" value="AAA+_ATPase"/>
</dbReference>
<dbReference type="InterPro" id="IPR003439">
    <property type="entry name" value="ABC_transporter-like_ATP-bd"/>
</dbReference>
<dbReference type="InterPro" id="IPR015856">
    <property type="entry name" value="ABC_transpr_CbiO/EcfA_su"/>
</dbReference>
<dbReference type="InterPro" id="IPR050095">
    <property type="entry name" value="ECF_ABC_transporter_ATP-bd"/>
</dbReference>
<dbReference type="InterPro" id="IPR027417">
    <property type="entry name" value="P-loop_NTPase"/>
</dbReference>
<dbReference type="PANTHER" id="PTHR43553:SF24">
    <property type="entry name" value="ENERGY-COUPLING FACTOR TRANSPORTER ATP-BINDING PROTEIN ECFA1"/>
    <property type="match status" value="1"/>
</dbReference>
<dbReference type="PANTHER" id="PTHR43553">
    <property type="entry name" value="HEAVY METAL TRANSPORTER"/>
    <property type="match status" value="1"/>
</dbReference>
<dbReference type="Pfam" id="PF00005">
    <property type="entry name" value="ABC_tran"/>
    <property type="match status" value="1"/>
</dbReference>
<dbReference type="SMART" id="SM00382">
    <property type="entry name" value="AAA"/>
    <property type="match status" value="1"/>
</dbReference>
<dbReference type="SUPFAM" id="SSF52540">
    <property type="entry name" value="P-loop containing nucleoside triphosphate hydrolases"/>
    <property type="match status" value="1"/>
</dbReference>
<dbReference type="PROSITE" id="PS50893">
    <property type="entry name" value="ABC_TRANSPORTER_2"/>
    <property type="match status" value="1"/>
</dbReference>
<gene>
    <name type="ordered locus">VNG_2317G</name>
</gene>
<proteinExistence type="inferred from homology"/>
<name>Y2317_HALSA</name>
<evidence type="ECO:0000250" key="1"/>
<evidence type="ECO:0000255" key="2">
    <source>
        <dbReference type="PROSITE-ProRule" id="PRU00434"/>
    </source>
</evidence>
<evidence type="ECO:0000305" key="3"/>
<keyword id="KW-0067">ATP-binding</keyword>
<keyword id="KW-1003">Cell membrane</keyword>
<keyword id="KW-0472">Membrane</keyword>
<keyword id="KW-0547">Nucleotide-binding</keyword>
<keyword id="KW-1185">Reference proteome</keyword>
<keyword id="KW-1278">Translocase</keyword>
<keyword id="KW-0813">Transport</keyword>